<feature type="chain" id="PRO_0000248000" description="LysM and putative peptidoglycan-binding domain-containing protein 1">
    <location>
        <begin position="1"/>
        <end position="215"/>
    </location>
</feature>
<feature type="domain" description="LysM" evidence="1">
    <location>
        <begin position="37"/>
        <end position="81"/>
    </location>
</feature>
<feature type="region of interest" description="Disordered" evidence="2">
    <location>
        <begin position="86"/>
        <end position="133"/>
    </location>
</feature>
<feature type="region of interest" description="Disordered" evidence="2">
    <location>
        <begin position="148"/>
        <end position="203"/>
    </location>
</feature>
<feature type="compositionally biased region" description="Polar residues" evidence="2">
    <location>
        <begin position="86"/>
        <end position="103"/>
    </location>
</feature>
<feature type="compositionally biased region" description="Polar residues" evidence="2">
    <location>
        <begin position="173"/>
        <end position="189"/>
    </location>
</feature>
<evidence type="ECO:0000255" key="1">
    <source>
        <dbReference type="PROSITE-ProRule" id="PRU01118"/>
    </source>
</evidence>
<evidence type="ECO:0000256" key="2">
    <source>
        <dbReference type="SAM" id="MobiDB-lite"/>
    </source>
</evidence>
<protein>
    <recommendedName>
        <fullName>LysM and putative peptidoglycan-binding domain-containing protein 1</fullName>
    </recommendedName>
</protein>
<gene>
    <name type="primary">lysmd1</name>
</gene>
<sequence length="215" mass="23935">MASNSGHRDTRLLHGARTRSYGSLVQTTYSPAQIRKLEHQVQPGDTLQGLALRYGVSMEQIKRANRLYTNDSIFLKKSLYIPATAGQSDLSDDQNSQEGSETEGSPVKQPEKGEKQKSRHHVVQKDEMSPVDFMSRLDTNIRVSKRAAVKKLREGESFATEESTPGGAPGYQGNRTPSRQNSPQTQQRSLLGPVPLTITTRASTIRDHEDEIFKL</sequence>
<accession>Q5PQ30</accession>
<organism>
    <name type="scientific">Xenopus laevis</name>
    <name type="common">African clawed frog</name>
    <dbReference type="NCBI Taxonomy" id="8355"/>
    <lineage>
        <taxon>Eukaryota</taxon>
        <taxon>Metazoa</taxon>
        <taxon>Chordata</taxon>
        <taxon>Craniata</taxon>
        <taxon>Vertebrata</taxon>
        <taxon>Euteleostomi</taxon>
        <taxon>Amphibia</taxon>
        <taxon>Batrachia</taxon>
        <taxon>Anura</taxon>
        <taxon>Pipoidea</taxon>
        <taxon>Pipidae</taxon>
        <taxon>Xenopodinae</taxon>
        <taxon>Xenopus</taxon>
        <taxon>Xenopus</taxon>
    </lineage>
</organism>
<dbReference type="EMBL" id="BC087389">
    <property type="protein sequence ID" value="AAH87389.1"/>
    <property type="molecule type" value="mRNA"/>
</dbReference>
<dbReference type="RefSeq" id="NP_001088735.1">
    <property type="nucleotide sequence ID" value="NM_001095266.1"/>
</dbReference>
<dbReference type="SMR" id="Q5PQ30"/>
<dbReference type="DNASU" id="495999"/>
<dbReference type="GeneID" id="495999"/>
<dbReference type="KEGG" id="xla:495999"/>
<dbReference type="AGR" id="Xenbase:XB-GENE-989801"/>
<dbReference type="CTD" id="495999"/>
<dbReference type="Xenbase" id="XB-GENE-989801">
    <property type="gene designation" value="lysmd1.S"/>
</dbReference>
<dbReference type="OMA" id="PMDFLKR"/>
<dbReference type="OrthoDB" id="2107166at2759"/>
<dbReference type="Proteomes" id="UP000186698">
    <property type="component" value="Chromosome 8S"/>
</dbReference>
<dbReference type="Bgee" id="495999">
    <property type="expression patterns" value="Expressed in oocyte and 19 other cell types or tissues"/>
</dbReference>
<dbReference type="CDD" id="cd00118">
    <property type="entry name" value="LysM"/>
    <property type="match status" value="1"/>
</dbReference>
<dbReference type="Gene3D" id="3.10.350.10">
    <property type="entry name" value="LysM domain"/>
    <property type="match status" value="1"/>
</dbReference>
<dbReference type="InterPro" id="IPR045030">
    <property type="entry name" value="LYSM1-4"/>
</dbReference>
<dbReference type="InterPro" id="IPR018392">
    <property type="entry name" value="LysM_dom"/>
</dbReference>
<dbReference type="InterPro" id="IPR036779">
    <property type="entry name" value="LysM_dom_sf"/>
</dbReference>
<dbReference type="PANTHER" id="PTHR20932:SF2">
    <property type="entry name" value="AND PUTATIVE PEPTIDOGLYCAN-BINDING DOMAIN-CONTAINING PROTEIN 1-RELATED"/>
    <property type="match status" value="1"/>
</dbReference>
<dbReference type="PANTHER" id="PTHR20932">
    <property type="entry name" value="LYSM AND PUTATIVE PEPTIDOGLYCAN-BINDING DOMAIN-CONTAINING PROTEIN"/>
    <property type="match status" value="1"/>
</dbReference>
<dbReference type="Pfam" id="PF01476">
    <property type="entry name" value="LysM"/>
    <property type="match status" value="1"/>
</dbReference>
<dbReference type="SMART" id="SM00257">
    <property type="entry name" value="LysM"/>
    <property type="match status" value="1"/>
</dbReference>
<dbReference type="SUPFAM" id="SSF54106">
    <property type="entry name" value="LysM domain"/>
    <property type="match status" value="1"/>
</dbReference>
<dbReference type="PROSITE" id="PS51782">
    <property type="entry name" value="LYSM"/>
    <property type="match status" value="1"/>
</dbReference>
<keyword id="KW-1185">Reference proteome</keyword>
<reference key="1">
    <citation type="submission" date="2004-12" db="EMBL/GenBank/DDBJ databases">
        <authorList>
            <consortium name="NIH - Xenopus Gene Collection (XGC) project"/>
        </authorList>
    </citation>
    <scope>NUCLEOTIDE SEQUENCE [LARGE SCALE MRNA]</scope>
    <source>
        <tissue>Testis</tissue>
    </source>
</reference>
<name>LYSM1_XENLA</name>
<proteinExistence type="evidence at transcript level"/>